<evidence type="ECO:0000255" key="1">
    <source>
        <dbReference type="HAMAP-Rule" id="MF_00270"/>
    </source>
</evidence>
<evidence type="ECO:0000256" key="2">
    <source>
        <dbReference type="SAM" id="MobiDB-lite"/>
    </source>
</evidence>
<evidence type="ECO:0000305" key="3"/>
<keyword id="KW-0934">Plastid</keyword>
<keyword id="KW-0687">Ribonucleoprotein</keyword>
<keyword id="KW-0689">Ribosomal protein</keyword>
<keyword id="KW-0694">RNA-binding</keyword>
<keyword id="KW-0699">rRNA-binding</keyword>
<comment type="subunit">
    <text evidence="1">Part of the 30S ribosomal subunit.</text>
</comment>
<comment type="subcellular location">
    <subcellularLocation>
        <location>Plastid</location>
    </subcellularLocation>
</comment>
<comment type="similarity">
    <text evidence="1">Belongs to the bacterial ribosomal protein bS18 family.</text>
</comment>
<name>RR18_CUSOB</name>
<gene>
    <name evidence="1" type="primary">rps18</name>
</gene>
<geneLocation type="plastid"/>
<accession>A8W3K5</accession>
<organism>
    <name type="scientific">Cuscuta obtusiflora</name>
    <name type="common">Peruvian dodder</name>
    <dbReference type="NCBI Taxonomy" id="437280"/>
    <lineage>
        <taxon>Eukaryota</taxon>
        <taxon>Viridiplantae</taxon>
        <taxon>Streptophyta</taxon>
        <taxon>Embryophyta</taxon>
        <taxon>Tracheophyta</taxon>
        <taxon>Spermatophyta</taxon>
        <taxon>Magnoliopsida</taxon>
        <taxon>eudicotyledons</taxon>
        <taxon>Gunneridae</taxon>
        <taxon>Pentapetalae</taxon>
        <taxon>asterids</taxon>
        <taxon>lamiids</taxon>
        <taxon>Solanales</taxon>
        <taxon>Convolvulaceae</taxon>
        <taxon>Cuscuteae</taxon>
        <taxon>Cuscuta</taxon>
        <taxon>Cuscuta subgen. Grammica</taxon>
        <taxon>Cuscuta sect. Cleistogrammica</taxon>
    </lineage>
</organism>
<feature type="chain" id="PRO_0000345580" description="Small ribosomal subunit protein bS18c">
    <location>
        <begin position="1"/>
        <end position="149"/>
    </location>
</feature>
<feature type="region of interest" description="Disordered" evidence="2">
    <location>
        <begin position="1"/>
        <end position="23"/>
    </location>
</feature>
<sequence>MDKITGPFRKSKKSFRKPLPPIQSGDRIDYQNIDVLRRFISQQGKILSRRVNRLTLKQQRLLNLAIKQARILSFLPFTNTESLEKMKARIREARLKAEEVRLKNKEARLKKAKDARLKAKEARNQKKTTLRKIFINPKTSKLNTETSQT</sequence>
<proteinExistence type="inferred from homology"/>
<protein>
    <recommendedName>
        <fullName evidence="3">Small ribosomal subunit protein bS18c</fullName>
    </recommendedName>
    <alternativeName>
        <fullName>Plastid 30S ribosomal protein S18</fullName>
    </alternativeName>
</protein>
<dbReference type="EMBL" id="EU189133">
    <property type="protein sequence ID" value="ABW20580.1"/>
    <property type="molecule type" value="Genomic_DNA"/>
</dbReference>
<dbReference type="RefSeq" id="YP_001531235.1">
    <property type="nucleotide sequence ID" value="NC_009949.1"/>
</dbReference>
<dbReference type="SMR" id="A8W3K5"/>
<dbReference type="GeneID" id="5714808"/>
<dbReference type="GO" id="GO:0005763">
    <property type="term" value="C:mitochondrial small ribosomal subunit"/>
    <property type="evidence" value="ECO:0007669"/>
    <property type="project" value="TreeGrafter"/>
</dbReference>
<dbReference type="GO" id="GO:0009536">
    <property type="term" value="C:plastid"/>
    <property type="evidence" value="ECO:0007669"/>
    <property type="project" value="UniProtKB-SubCell"/>
</dbReference>
<dbReference type="GO" id="GO:0070181">
    <property type="term" value="F:small ribosomal subunit rRNA binding"/>
    <property type="evidence" value="ECO:0007669"/>
    <property type="project" value="TreeGrafter"/>
</dbReference>
<dbReference type="GO" id="GO:0003735">
    <property type="term" value="F:structural constituent of ribosome"/>
    <property type="evidence" value="ECO:0007669"/>
    <property type="project" value="InterPro"/>
</dbReference>
<dbReference type="GO" id="GO:0006412">
    <property type="term" value="P:translation"/>
    <property type="evidence" value="ECO:0007669"/>
    <property type="project" value="InterPro"/>
</dbReference>
<dbReference type="FunFam" id="4.10.640.10:FF:000002">
    <property type="entry name" value="30S ribosomal protein S18, chloroplastic"/>
    <property type="match status" value="1"/>
</dbReference>
<dbReference type="Gene3D" id="4.10.640.10">
    <property type="entry name" value="Ribosomal protein S18"/>
    <property type="match status" value="1"/>
</dbReference>
<dbReference type="HAMAP" id="MF_00270">
    <property type="entry name" value="Ribosomal_bS18"/>
    <property type="match status" value="1"/>
</dbReference>
<dbReference type="InterPro" id="IPR001648">
    <property type="entry name" value="Ribosomal_bS18"/>
</dbReference>
<dbReference type="InterPro" id="IPR036870">
    <property type="entry name" value="Ribosomal_bS18_sf"/>
</dbReference>
<dbReference type="NCBIfam" id="TIGR00165">
    <property type="entry name" value="S18"/>
    <property type="match status" value="1"/>
</dbReference>
<dbReference type="PANTHER" id="PTHR13479">
    <property type="entry name" value="30S RIBOSOMAL PROTEIN S18"/>
    <property type="match status" value="1"/>
</dbReference>
<dbReference type="PANTHER" id="PTHR13479:SF40">
    <property type="entry name" value="SMALL RIBOSOMAL SUBUNIT PROTEIN BS18M"/>
    <property type="match status" value="1"/>
</dbReference>
<dbReference type="Pfam" id="PF01084">
    <property type="entry name" value="Ribosomal_S18"/>
    <property type="match status" value="1"/>
</dbReference>
<dbReference type="PRINTS" id="PR00974">
    <property type="entry name" value="RIBOSOMALS18"/>
</dbReference>
<dbReference type="SUPFAM" id="SSF46911">
    <property type="entry name" value="Ribosomal protein S18"/>
    <property type="match status" value="1"/>
</dbReference>
<reference key="1">
    <citation type="journal article" date="2007" name="BMC Plant Biol.">
        <title>Complete plastid genome sequences suggest strong selection for retention of photosynthetic genes in the parasitic plant genus Cuscuta.</title>
        <authorList>
            <person name="McNeal J.R."/>
            <person name="Kuehl J.V."/>
            <person name="Boore J.L."/>
            <person name="dePamphilis C.W."/>
        </authorList>
    </citation>
    <scope>NUCLEOTIDE SEQUENCE [LARGE SCALE GENOMIC DNA]</scope>
</reference>